<evidence type="ECO:0000255" key="1">
    <source>
        <dbReference type="HAMAP-Rule" id="MF_00373"/>
    </source>
</evidence>
<evidence type="ECO:0000305" key="2"/>
<proteinExistence type="inferred from homology"/>
<keyword id="KW-1185">Reference proteome</keyword>
<keyword id="KW-0687">Ribonucleoprotein</keyword>
<keyword id="KW-0689">Ribosomal protein</keyword>
<comment type="similarity">
    <text evidence="1">Belongs to the bacterial ribosomal protein bL28 family.</text>
</comment>
<gene>
    <name evidence="1" type="primary">rpmB</name>
    <name type="ordered locus">Glov_2282</name>
</gene>
<sequence length="64" mass="6854">MSRKCEICGKGPSTGNNVSHANNKTRTTWYPNLQKVKAKAANGSVSTIKVCTRCIRSGSVTKAL</sequence>
<name>RL28_TRIL1</name>
<reference key="1">
    <citation type="submission" date="2008-05" db="EMBL/GenBank/DDBJ databases">
        <title>Complete sequence of chromosome of Geobacter lovleyi SZ.</title>
        <authorList>
            <consortium name="US DOE Joint Genome Institute"/>
            <person name="Lucas S."/>
            <person name="Copeland A."/>
            <person name="Lapidus A."/>
            <person name="Glavina del Rio T."/>
            <person name="Dalin E."/>
            <person name="Tice H."/>
            <person name="Bruce D."/>
            <person name="Goodwin L."/>
            <person name="Pitluck S."/>
            <person name="Chertkov O."/>
            <person name="Meincke L."/>
            <person name="Brettin T."/>
            <person name="Detter J.C."/>
            <person name="Han C."/>
            <person name="Tapia R."/>
            <person name="Kuske C.R."/>
            <person name="Schmutz J."/>
            <person name="Larimer F."/>
            <person name="Land M."/>
            <person name="Hauser L."/>
            <person name="Kyrpides N."/>
            <person name="Mikhailova N."/>
            <person name="Sung Y."/>
            <person name="Fletcher K.E."/>
            <person name="Ritalahti K.M."/>
            <person name="Loeffler F.E."/>
            <person name="Richardson P."/>
        </authorList>
    </citation>
    <scope>NUCLEOTIDE SEQUENCE [LARGE SCALE GENOMIC DNA]</scope>
    <source>
        <strain>ATCC BAA-1151 / DSM 17278 / SZ</strain>
    </source>
</reference>
<dbReference type="EMBL" id="CP001089">
    <property type="protein sequence ID" value="ACD95998.1"/>
    <property type="molecule type" value="Genomic_DNA"/>
</dbReference>
<dbReference type="RefSeq" id="WP_012470332.1">
    <property type="nucleotide sequence ID" value="NC_010814.1"/>
</dbReference>
<dbReference type="SMR" id="B3E4R2"/>
<dbReference type="STRING" id="398767.Glov_2282"/>
<dbReference type="KEGG" id="glo:Glov_2282"/>
<dbReference type="eggNOG" id="COG0227">
    <property type="taxonomic scope" value="Bacteria"/>
</dbReference>
<dbReference type="HOGENOM" id="CLU_064548_7_0_7"/>
<dbReference type="OrthoDB" id="9805609at2"/>
<dbReference type="Proteomes" id="UP000002420">
    <property type="component" value="Chromosome"/>
</dbReference>
<dbReference type="GO" id="GO:1990904">
    <property type="term" value="C:ribonucleoprotein complex"/>
    <property type="evidence" value="ECO:0007669"/>
    <property type="project" value="UniProtKB-KW"/>
</dbReference>
<dbReference type="GO" id="GO:0005840">
    <property type="term" value="C:ribosome"/>
    <property type="evidence" value="ECO:0007669"/>
    <property type="project" value="UniProtKB-KW"/>
</dbReference>
<dbReference type="GO" id="GO:0003735">
    <property type="term" value="F:structural constituent of ribosome"/>
    <property type="evidence" value="ECO:0007669"/>
    <property type="project" value="InterPro"/>
</dbReference>
<dbReference type="GO" id="GO:0006412">
    <property type="term" value="P:translation"/>
    <property type="evidence" value="ECO:0007669"/>
    <property type="project" value="UniProtKB-UniRule"/>
</dbReference>
<dbReference type="Gene3D" id="2.20.150.30">
    <property type="match status" value="1"/>
</dbReference>
<dbReference type="Gene3D" id="2.30.170.40">
    <property type="entry name" value="Ribosomal protein L28/L24"/>
    <property type="match status" value="1"/>
</dbReference>
<dbReference type="HAMAP" id="MF_00373">
    <property type="entry name" value="Ribosomal_bL28"/>
    <property type="match status" value="1"/>
</dbReference>
<dbReference type="InterPro" id="IPR050096">
    <property type="entry name" value="Bacterial_rp_bL28"/>
</dbReference>
<dbReference type="InterPro" id="IPR026569">
    <property type="entry name" value="Ribosomal_bL28"/>
</dbReference>
<dbReference type="InterPro" id="IPR034704">
    <property type="entry name" value="Ribosomal_bL28/bL31-like_sf"/>
</dbReference>
<dbReference type="InterPro" id="IPR001383">
    <property type="entry name" value="Ribosomal_bL28_bact-type"/>
</dbReference>
<dbReference type="InterPro" id="IPR037147">
    <property type="entry name" value="Ribosomal_bL28_sf"/>
</dbReference>
<dbReference type="NCBIfam" id="TIGR00009">
    <property type="entry name" value="L28"/>
    <property type="match status" value="1"/>
</dbReference>
<dbReference type="PANTHER" id="PTHR39080">
    <property type="entry name" value="50S RIBOSOMAL PROTEIN L28"/>
    <property type="match status" value="1"/>
</dbReference>
<dbReference type="PANTHER" id="PTHR39080:SF1">
    <property type="entry name" value="LARGE RIBOSOMAL SUBUNIT PROTEIN BL28A"/>
    <property type="match status" value="1"/>
</dbReference>
<dbReference type="Pfam" id="PF00830">
    <property type="entry name" value="Ribosomal_L28"/>
    <property type="match status" value="1"/>
</dbReference>
<dbReference type="SUPFAM" id="SSF143800">
    <property type="entry name" value="L28p-like"/>
    <property type="match status" value="1"/>
</dbReference>
<feature type="chain" id="PRO_1000121640" description="Large ribosomal subunit protein bL28">
    <location>
        <begin position="1"/>
        <end position="64"/>
    </location>
</feature>
<protein>
    <recommendedName>
        <fullName evidence="1">Large ribosomal subunit protein bL28</fullName>
    </recommendedName>
    <alternativeName>
        <fullName evidence="2">50S ribosomal protein L28</fullName>
    </alternativeName>
</protein>
<accession>B3E4R2</accession>
<organism>
    <name type="scientific">Trichlorobacter lovleyi (strain ATCC BAA-1151 / DSM 17278 / SZ)</name>
    <name type="common">Geobacter lovleyi</name>
    <dbReference type="NCBI Taxonomy" id="398767"/>
    <lineage>
        <taxon>Bacteria</taxon>
        <taxon>Pseudomonadati</taxon>
        <taxon>Thermodesulfobacteriota</taxon>
        <taxon>Desulfuromonadia</taxon>
        <taxon>Geobacterales</taxon>
        <taxon>Geobacteraceae</taxon>
        <taxon>Trichlorobacter</taxon>
    </lineage>
</organism>